<keyword id="KW-0067">ATP-binding</keyword>
<keyword id="KW-0963">Cytoplasm</keyword>
<keyword id="KW-0460">Magnesium</keyword>
<keyword id="KW-0479">Metal-binding</keyword>
<keyword id="KW-0547">Nucleotide-binding</keyword>
<keyword id="KW-0554">One-carbon metabolism</keyword>
<keyword id="KW-0630">Potassium</keyword>
<keyword id="KW-0808">Transferase</keyword>
<reference key="1">
    <citation type="journal article" date="1999" name="Nature">
        <title>Genomic sequence comparison of two unrelated isolates of the human gastric pathogen Helicobacter pylori.</title>
        <authorList>
            <person name="Alm R.A."/>
            <person name="Ling L.-S.L."/>
            <person name="Moir D.T."/>
            <person name="King B.L."/>
            <person name="Brown E.D."/>
            <person name="Doig P.C."/>
            <person name="Smith D.R."/>
            <person name="Noonan B."/>
            <person name="Guild B.C."/>
            <person name="deJonge B.L."/>
            <person name="Carmel G."/>
            <person name="Tummino P.J."/>
            <person name="Caruso A."/>
            <person name="Uria-Nickelsen M."/>
            <person name="Mills D.M."/>
            <person name="Ives C."/>
            <person name="Gibson R."/>
            <person name="Merberg D."/>
            <person name="Mills S.D."/>
            <person name="Jiang Q."/>
            <person name="Taylor D.E."/>
            <person name="Vovis G.F."/>
            <person name="Trust T.J."/>
        </authorList>
    </citation>
    <scope>NUCLEOTIDE SEQUENCE [LARGE SCALE GENOMIC DNA]</scope>
    <source>
        <strain>J99 / ATCC 700824</strain>
    </source>
</reference>
<dbReference type="EC" id="2.5.1.6" evidence="1"/>
<dbReference type="EMBL" id="AE001439">
    <property type="protein sequence ID" value="AAD05755.1"/>
    <property type="molecule type" value="Genomic_DNA"/>
</dbReference>
<dbReference type="PIR" id="D71964">
    <property type="entry name" value="D71964"/>
</dbReference>
<dbReference type="RefSeq" id="WP_000655111.1">
    <property type="nucleotide sequence ID" value="NZ_CP011330.1"/>
</dbReference>
<dbReference type="SMR" id="Q9ZMN5"/>
<dbReference type="KEGG" id="hpj:jhp_0183"/>
<dbReference type="PATRIC" id="fig|85963.30.peg.838"/>
<dbReference type="eggNOG" id="COG0192">
    <property type="taxonomic scope" value="Bacteria"/>
</dbReference>
<dbReference type="UniPathway" id="UPA00315">
    <property type="reaction ID" value="UER00080"/>
</dbReference>
<dbReference type="Proteomes" id="UP000000804">
    <property type="component" value="Chromosome"/>
</dbReference>
<dbReference type="GO" id="GO:0005737">
    <property type="term" value="C:cytoplasm"/>
    <property type="evidence" value="ECO:0007669"/>
    <property type="project" value="UniProtKB-SubCell"/>
</dbReference>
<dbReference type="GO" id="GO:0005524">
    <property type="term" value="F:ATP binding"/>
    <property type="evidence" value="ECO:0007669"/>
    <property type="project" value="UniProtKB-UniRule"/>
</dbReference>
<dbReference type="GO" id="GO:0000287">
    <property type="term" value="F:magnesium ion binding"/>
    <property type="evidence" value="ECO:0007669"/>
    <property type="project" value="UniProtKB-UniRule"/>
</dbReference>
<dbReference type="GO" id="GO:0004478">
    <property type="term" value="F:methionine adenosyltransferase activity"/>
    <property type="evidence" value="ECO:0007669"/>
    <property type="project" value="UniProtKB-UniRule"/>
</dbReference>
<dbReference type="GO" id="GO:0006730">
    <property type="term" value="P:one-carbon metabolic process"/>
    <property type="evidence" value="ECO:0007669"/>
    <property type="project" value="UniProtKB-KW"/>
</dbReference>
<dbReference type="GO" id="GO:0006556">
    <property type="term" value="P:S-adenosylmethionine biosynthetic process"/>
    <property type="evidence" value="ECO:0007669"/>
    <property type="project" value="UniProtKB-UniRule"/>
</dbReference>
<dbReference type="CDD" id="cd18079">
    <property type="entry name" value="S-AdoMet_synt"/>
    <property type="match status" value="1"/>
</dbReference>
<dbReference type="FunFam" id="3.30.300.10:FF:000003">
    <property type="entry name" value="S-adenosylmethionine synthase"/>
    <property type="match status" value="1"/>
</dbReference>
<dbReference type="Gene3D" id="3.30.300.10">
    <property type="match status" value="3"/>
</dbReference>
<dbReference type="HAMAP" id="MF_00086">
    <property type="entry name" value="S_AdoMet_synth1"/>
    <property type="match status" value="1"/>
</dbReference>
<dbReference type="InterPro" id="IPR022631">
    <property type="entry name" value="ADOMET_SYNTHASE_CS"/>
</dbReference>
<dbReference type="InterPro" id="IPR022630">
    <property type="entry name" value="S-AdoMet_synt_C"/>
</dbReference>
<dbReference type="InterPro" id="IPR022629">
    <property type="entry name" value="S-AdoMet_synt_central"/>
</dbReference>
<dbReference type="InterPro" id="IPR022628">
    <property type="entry name" value="S-AdoMet_synt_N"/>
</dbReference>
<dbReference type="InterPro" id="IPR002133">
    <property type="entry name" value="S-AdoMet_synthetase"/>
</dbReference>
<dbReference type="InterPro" id="IPR022636">
    <property type="entry name" value="S-AdoMet_synthetase_sfam"/>
</dbReference>
<dbReference type="NCBIfam" id="TIGR01034">
    <property type="entry name" value="metK"/>
    <property type="match status" value="1"/>
</dbReference>
<dbReference type="PANTHER" id="PTHR11964">
    <property type="entry name" value="S-ADENOSYLMETHIONINE SYNTHETASE"/>
    <property type="match status" value="1"/>
</dbReference>
<dbReference type="Pfam" id="PF02773">
    <property type="entry name" value="S-AdoMet_synt_C"/>
    <property type="match status" value="1"/>
</dbReference>
<dbReference type="Pfam" id="PF02772">
    <property type="entry name" value="S-AdoMet_synt_M"/>
    <property type="match status" value="1"/>
</dbReference>
<dbReference type="Pfam" id="PF00438">
    <property type="entry name" value="S-AdoMet_synt_N"/>
    <property type="match status" value="1"/>
</dbReference>
<dbReference type="PIRSF" id="PIRSF000497">
    <property type="entry name" value="MAT"/>
    <property type="match status" value="1"/>
</dbReference>
<dbReference type="SUPFAM" id="SSF55973">
    <property type="entry name" value="S-adenosylmethionine synthetase"/>
    <property type="match status" value="3"/>
</dbReference>
<dbReference type="PROSITE" id="PS00376">
    <property type="entry name" value="ADOMET_SYNTHASE_1"/>
    <property type="match status" value="1"/>
</dbReference>
<dbReference type="PROSITE" id="PS00377">
    <property type="entry name" value="ADOMET_SYNTHASE_2"/>
    <property type="match status" value="1"/>
</dbReference>
<organism>
    <name type="scientific">Helicobacter pylori (strain J99 / ATCC 700824)</name>
    <name type="common">Campylobacter pylori J99</name>
    <dbReference type="NCBI Taxonomy" id="85963"/>
    <lineage>
        <taxon>Bacteria</taxon>
        <taxon>Pseudomonadati</taxon>
        <taxon>Campylobacterota</taxon>
        <taxon>Epsilonproteobacteria</taxon>
        <taxon>Campylobacterales</taxon>
        <taxon>Helicobacteraceae</taxon>
        <taxon>Helicobacter</taxon>
    </lineage>
</organism>
<comment type="function">
    <text evidence="1">Catalyzes the formation of S-adenosylmethionine (AdoMet) from methionine and ATP. The overall synthetic reaction is composed of two sequential steps, AdoMet formation and the subsequent tripolyphosphate hydrolysis which occurs prior to release of AdoMet from the enzyme.</text>
</comment>
<comment type="catalytic activity">
    <reaction evidence="1">
        <text>L-methionine + ATP + H2O = S-adenosyl-L-methionine + phosphate + diphosphate</text>
        <dbReference type="Rhea" id="RHEA:21080"/>
        <dbReference type="ChEBI" id="CHEBI:15377"/>
        <dbReference type="ChEBI" id="CHEBI:30616"/>
        <dbReference type="ChEBI" id="CHEBI:33019"/>
        <dbReference type="ChEBI" id="CHEBI:43474"/>
        <dbReference type="ChEBI" id="CHEBI:57844"/>
        <dbReference type="ChEBI" id="CHEBI:59789"/>
        <dbReference type="EC" id="2.5.1.6"/>
    </reaction>
</comment>
<comment type="cofactor">
    <cofactor evidence="1">
        <name>Mg(2+)</name>
        <dbReference type="ChEBI" id="CHEBI:18420"/>
    </cofactor>
    <text evidence="1">Binds 2 divalent ions per subunit.</text>
</comment>
<comment type="cofactor">
    <cofactor evidence="1">
        <name>K(+)</name>
        <dbReference type="ChEBI" id="CHEBI:29103"/>
    </cofactor>
    <text evidence="1">Binds 1 potassium ion per subunit.</text>
</comment>
<comment type="pathway">
    <text evidence="1">Amino-acid biosynthesis; S-adenosyl-L-methionine biosynthesis; S-adenosyl-L-methionine from L-methionine: step 1/1.</text>
</comment>
<comment type="subunit">
    <text evidence="1">Homotetramer; dimer of dimers.</text>
</comment>
<comment type="subcellular location">
    <subcellularLocation>
        <location evidence="1">Cytoplasm</location>
    </subcellularLocation>
</comment>
<comment type="similarity">
    <text evidence="1">Belongs to the AdoMet synthase family.</text>
</comment>
<name>METK_HELPJ</name>
<feature type="chain" id="PRO_0000174532" description="S-adenosylmethionine synthase">
    <location>
        <begin position="1"/>
        <end position="385"/>
    </location>
</feature>
<feature type="region of interest" description="Flexible loop" evidence="1">
    <location>
        <begin position="100"/>
        <end position="110"/>
    </location>
</feature>
<feature type="binding site" description="in other chain" evidence="1">
    <location>
        <position position="16"/>
    </location>
    <ligand>
        <name>ATP</name>
        <dbReference type="ChEBI" id="CHEBI:30616"/>
        <note>ligand shared between two neighboring subunits</note>
    </ligand>
</feature>
<feature type="binding site" evidence="1">
    <location>
        <position position="18"/>
    </location>
    <ligand>
        <name>Mg(2+)</name>
        <dbReference type="ChEBI" id="CHEBI:18420"/>
    </ligand>
</feature>
<feature type="binding site" evidence="1">
    <location>
        <position position="44"/>
    </location>
    <ligand>
        <name>K(+)</name>
        <dbReference type="ChEBI" id="CHEBI:29103"/>
    </ligand>
</feature>
<feature type="binding site" description="in other chain" evidence="1">
    <location>
        <position position="57"/>
    </location>
    <ligand>
        <name>L-methionine</name>
        <dbReference type="ChEBI" id="CHEBI:57844"/>
        <note>ligand shared between two neighboring subunits</note>
    </ligand>
</feature>
<feature type="binding site" description="in other chain" evidence="1">
    <location>
        <position position="100"/>
    </location>
    <ligand>
        <name>L-methionine</name>
        <dbReference type="ChEBI" id="CHEBI:57844"/>
        <note>ligand shared between two neighboring subunits</note>
    </ligand>
</feature>
<feature type="binding site" description="in other chain" evidence="1">
    <location>
        <begin position="164"/>
        <end position="166"/>
    </location>
    <ligand>
        <name>ATP</name>
        <dbReference type="ChEBI" id="CHEBI:30616"/>
        <note>ligand shared between two neighboring subunits</note>
    </ligand>
</feature>
<feature type="binding site" description="in other chain" evidence="1">
    <location>
        <begin position="230"/>
        <end position="231"/>
    </location>
    <ligand>
        <name>ATP</name>
        <dbReference type="ChEBI" id="CHEBI:30616"/>
        <note>ligand shared between two neighboring subunits</note>
    </ligand>
</feature>
<feature type="binding site" evidence="1">
    <location>
        <position position="239"/>
    </location>
    <ligand>
        <name>ATP</name>
        <dbReference type="ChEBI" id="CHEBI:30616"/>
        <note>ligand shared between two neighboring subunits</note>
    </ligand>
</feature>
<feature type="binding site" evidence="1">
    <location>
        <position position="239"/>
    </location>
    <ligand>
        <name>L-methionine</name>
        <dbReference type="ChEBI" id="CHEBI:57844"/>
        <note>ligand shared between two neighboring subunits</note>
    </ligand>
</feature>
<feature type="binding site" description="in other chain" evidence="1">
    <location>
        <begin position="245"/>
        <end position="246"/>
    </location>
    <ligand>
        <name>ATP</name>
        <dbReference type="ChEBI" id="CHEBI:30616"/>
        <note>ligand shared between two neighboring subunits</note>
    </ligand>
</feature>
<feature type="binding site" evidence="1">
    <location>
        <position position="262"/>
    </location>
    <ligand>
        <name>ATP</name>
        <dbReference type="ChEBI" id="CHEBI:30616"/>
        <note>ligand shared between two neighboring subunits</note>
    </ligand>
</feature>
<feature type="binding site" evidence="1">
    <location>
        <position position="266"/>
    </location>
    <ligand>
        <name>ATP</name>
        <dbReference type="ChEBI" id="CHEBI:30616"/>
        <note>ligand shared between two neighboring subunits</note>
    </ligand>
</feature>
<feature type="binding site" description="in other chain" evidence="1">
    <location>
        <position position="270"/>
    </location>
    <ligand>
        <name>L-methionine</name>
        <dbReference type="ChEBI" id="CHEBI:57844"/>
        <note>ligand shared between two neighboring subunits</note>
    </ligand>
</feature>
<proteinExistence type="inferred from homology"/>
<protein>
    <recommendedName>
        <fullName evidence="1">S-adenosylmethionine synthase</fullName>
        <shortName evidence="1">AdoMet synthase</shortName>
        <ecNumber evidence="1">2.5.1.6</ecNumber>
    </recommendedName>
    <alternativeName>
        <fullName evidence="1">MAT</fullName>
    </alternativeName>
    <alternativeName>
        <fullName evidence="1">Methionine adenosyltransferase</fullName>
    </alternativeName>
</protein>
<evidence type="ECO:0000255" key="1">
    <source>
        <dbReference type="HAMAP-Rule" id="MF_00086"/>
    </source>
</evidence>
<gene>
    <name evidence="1" type="primary">metK</name>
    <name type="ordered locus">jhp_0183</name>
</gene>
<sequence length="385" mass="42418">MKDSFLFTSESVTEGHPDKMADQISDAVLDYIIERDKKAKVACETLVSNGFCMITGELKTSVYAPMQEIAREVVKKIGYTDALYGFDYRSAAVLNGIGEQSPDINQGVDREDGEIGAGDQGLMFGYACKETETLMPLPIHLAHQLAFALAQKRKDNTLPFLRPDGKSQVSVRYENNKPVSVDTIVISTQHSPEVSQKHLKEAVIEEIVYKVLPKEYLHDNIKFFINPTGKFVIGGPQGDAGLTGRKIIVDTYGGFCPHGGGAFSGKDPSKVDRSAAYAARYVAKNLVASGVCDKATVQLAYAIGVIEPVSIYVNTHNTSKHSSAELEKCVKSVFKLTPKGIIESLDLLRPIYSLTSAYGHFGRELEEFTWEKTNKVEEIKAFFKR</sequence>
<accession>Q9ZMN5</accession>